<name>MAP11_HUMAN</name>
<protein>
    <recommendedName>
        <fullName evidence="1">Methionine aminopeptidase 1</fullName>
        <shortName evidence="1">MAP 1</shortName>
        <shortName evidence="1">MetAP 1</shortName>
        <ecNumber evidence="1">3.4.11.18</ecNumber>
    </recommendedName>
    <alternativeName>
        <fullName evidence="1">Peptidase M 1</fullName>
    </alternativeName>
</protein>
<feature type="initiator methionine" description="Removed" evidence="8">
    <location>
        <position position="1"/>
    </location>
</feature>
<feature type="chain" id="PRO_0000148967" description="Methionine aminopeptidase 1">
    <location>
        <begin position="2"/>
        <end position="386"/>
    </location>
</feature>
<feature type="zinc finger region" description="C6H2-type" evidence="2">
    <location>
        <begin position="6"/>
        <end position="59"/>
    </location>
</feature>
<feature type="binding site" evidence="1">
    <location>
        <position position="9"/>
    </location>
    <ligand>
        <name>Zn(2+)</name>
        <dbReference type="ChEBI" id="CHEBI:29105"/>
        <label>1</label>
    </ligand>
</feature>
<feature type="binding site" evidence="1">
    <location>
        <position position="14"/>
    </location>
    <ligand>
        <name>Zn(2+)</name>
        <dbReference type="ChEBI" id="CHEBI:29105"/>
        <label>1</label>
    </ligand>
</feature>
<feature type="binding site" evidence="1">
    <location>
        <position position="22"/>
    </location>
    <ligand>
        <name>Zn(2+)</name>
        <dbReference type="ChEBI" id="CHEBI:29105"/>
        <label>2</label>
    </ligand>
</feature>
<feature type="binding site" evidence="1">
    <location>
        <position position="25"/>
    </location>
    <ligand>
        <name>Zn(2+)</name>
        <dbReference type="ChEBI" id="CHEBI:29105"/>
        <label>2</label>
    </ligand>
</feature>
<feature type="binding site" evidence="1">
    <location>
        <position position="36"/>
    </location>
    <ligand>
        <name>Zn(2+)</name>
        <dbReference type="ChEBI" id="CHEBI:29105"/>
        <label>1</label>
    </ligand>
</feature>
<feature type="binding site" evidence="1">
    <location>
        <position position="40"/>
    </location>
    <ligand>
        <name>Zn(2+)</name>
        <dbReference type="ChEBI" id="CHEBI:29105"/>
        <label>1</label>
    </ligand>
</feature>
<feature type="binding site" evidence="1">
    <location>
        <position position="48"/>
    </location>
    <ligand>
        <name>Zn(2+)</name>
        <dbReference type="ChEBI" id="CHEBI:29105"/>
        <label>2</label>
    </ligand>
</feature>
<feature type="binding site" evidence="1">
    <location>
        <position position="52"/>
    </location>
    <ligand>
        <name>Zn(2+)</name>
        <dbReference type="ChEBI" id="CHEBI:29105"/>
        <label>2</label>
    </ligand>
</feature>
<feature type="binding site" evidence="1 4 5 6">
    <location>
        <position position="203"/>
    </location>
    <ligand>
        <name>a protein</name>
        <dbReference type="ChEBI" id="CHEBI:16541"/>
    </ligand>
    <ligandPart>
        <name>N-terminal L-methionine residue</name>
        <dbReference type="ChEBI" id="CHEBI:64731"/>
    </ligandPart>
</feature>
<feature type="binding site" evidence="1 3 4 5 6">
    <location>
        <position position="220"/>
    </location>
    <ligand>
        <name>Zn(2+)</name>
        <dbReference type="ChEBI" id="CHEBI:29105"/>
        <label>3</label>
    </ligand>
</feature>
<feature type="binding site" evidence="1 3 4 5 6">
    <location>
        <position position="231"/>
    </location>
    <ligand>
        <name>Zn(2+)</name>
        <dbReference type="ChEBI" id="CHEBI:29105"/>
        <label>3</label>
    </ligand>
</feature>
<feature type="binding site" evidence="1 3 4 5 6">
    <location>
        <position position="231"/>
    </location>
    <ligand>
        <name>Zn(2+)</name>
        <dbReference type="ChEBI" id="CHEBI:29105"/>
        <label>4</label>
        <note>catalytic</note>
    </ligand>
</feature>
<feature type="binding site" evidence="1 3 4 5 6">
    <location>
        <position position="294"/>
    </location>
    <ligand>
        <name>Zn(2+)</name>
        <dbReference type="ChEBI" id="CHEBI:29105"/>
        <label>4</label>
        <note>catalytic</note>
    </ligand>
</feature>
<feature type="binding site" evidence="1 4 5 6">
    <location>
        <position position="301"/>
    </location>
    <ligand>
        <name>a protein</name>
        <dbReference type="ChEBI" id="CHEBI:16541"/>
    </ligand>
    <ligandPart>
        <name>N-terminal L-methionine residue</name>
        <dbReference type="ChEBI" id="CHEBI:64731"/>
    </ligandPart>
</feature>
<feature type="binding site" evidence="1 3 4 5 6">
    <location>
        <position position="327"/>
    </location>
    <ligand>
        <name>Zn(2+)</name>
        <dbReference type="ChEBI" id="CHEBI:29105"/>
        <label>4</label>
        <note>catalytic</note>
    </ligand>
</feature>
<feature type="binding site" evidence="1 3 4 5 6">
    <location>
        <position position="358"/>
    </location>
    <ligand>
        <name>Zn(2+)</name>
        <dbReference type="ChEBI" id="CHEBI:29105"/>
        <label>3</label>
    </ligand>
</feature>
<feature type="binding site" evidence="1 3 4 5 6">
    <location>
        <position position="358"/>
    </location>
    <ligand>
        <name>Zn(2+)</name>
        <dbReference type="ChEBI" id="CHEBI:29105"/>
        <label>4</label>
        <note>catalytic</note>
    </ligand>
</feature>
<feature type="modified residue" description="N-acetylalanine" evidence="8">
    <location>
        <position position="2"/>
    </location>
</feature>
<feature type="strand" evidence="9">
    <location>
        <begin position="84"/>
        <end position="86"/>
    </location>
</feature>
<feature type="helix" evidence="9">
    <location>
        <begin position="107"/>
        <end position="110"/>
    </location>
</feature>
<feature type="helix" evidence="9">
    <location>
        <begin position="117"/>
        <end position="121"/>
    </location>
</feature>
<feature type="turn" evidence="9">
    <location>
        <begin position="122"/>
        <end position="124"/>
    </location>
</feature>
<feature type="helix" evidence="9">
    <location>
        <begin position="133"/>
        <end position="155"/>
    </location>
</feature>
<feature type="helix" evidence="9">
    <location>
        <begin position="163"/>
        <end position="176"/>
    </location>
</feature>
<feature type="turn" evidence="9">
    <location>
        <begin position="182"/>
        <end position="185"/>
    </location>
</feature>
<feature type="helix" evidence="9">
    <location>
        <begin position="186"/>
        <end position="188"/>
    </location>
</feature>
<feature type="strand" evidence="9">
    <location>
        <begin position="191"/>
        <end position="197"/>
    </location>
</feature>
<feature type="strand" evidence="9">
    <location>
        <begin position="200"/>
        <end position="202"/>
    </location>
</feature>
<feature type="strand" evidence="9">
    <location>
        <begin position="216"/>
        <end position="225"/>
    </location>
</feature>
<feature type="strand" evidence="9">
    <location>
        <begin position="228"/>
        <end position="237"/>
    </location>
</feature>
<feature type="helix" evidence="9">
    <location>
        <begin position="243"/>
        <end position="261"/>
    </location>
</feature>
<feature type="helix" evidence="9">
    <location>
        <begin position="271"/>
        <end position="282"/>
    </location>
</feature>
<feature type="strand" evidence="9">
    <location>
        <begin position="293"/>
        <end position="295"/>
    </location>
</feature>
<feature type="strand" evidence="9">
    <location>
        <begin position="297"/>
        <end position="306"/>
    </location>
</feature>
<feature type="strand" evidence="9">
    <location>
        <begin position="309"/>
        <end position="311"/>
    </location>
</feature>
<feature type="strand" evidence="9">
    <location>
        <begin position="323"/>
        <end position="326"/>
    </location>
</feature>
<feature type="strand" evidence="9">
    <location>
        <begin position="329"/>
        <end position="333"/>
    </location>
</feature>
<feature type="strand" evidence="9">
    <location>
        <begin position="337"/>
        <end position="339"/>
    </location>
</feature>
<feature type="strand" evidence="9">
    <location>
        <begin position="346"/>
        <end position="348"/>
    </location>
</feature>
<feature type="strand" evidence="9">
    <location>
        <begin position="354"/>
        <end position="356"/>
    </location>
</feature>
<feature type="strand" evidence="9">
    <location>
        <begin position="358"/>
        <end position="363"/>
    </location>
</feature>
<feature type="strand" evidence="9">
    <location>
        <begin position="365"/>
        <end position="370"/>
    </location>
</feature>
<feature type="helix" evidence="9">
    <location>
        <begin position="381"/>
        <end position="383"/>
    </location>
</feature>
<organism>
    <name type="scientific">Homo sapiens</name>
    <name type="common">Human</name>
    <dbReference type="NCBI Taxonomy" id="9606"/>
    <lineage>
        <taxon>Eukaryota</taxon>
        <taxon>Metazoa</taxon>
        <taxon>Chordata</taxon>
        <taxon>Craniata</taxon>
        <taxon>Vertebrata</taxon>
        <taxon>Euteleostomi</taxon>
        <taxon>Mammalia</taxon>
        <taxon>Eutheria</taxon>
        <taxon>Euarchontoglires</taxon>
        <taxon>Primates</taxon>
        <taxon>Haplorrhini</taxon>
        <taxon>Catarrhini</taxon>
        <taxon>Hominidae</taxon>
        <taxon>Homo</taxon>
    </lineage>
</organism>
<reference key="1">
    <citation type="journal article" date="1995" name="DNA Res.">
        <title>Prediction of the coding sequences of unidentified human genes. III. The coding sequences of 40 new genes (KIAA0081-KIAA0120) deduced by analysis of cDNA clones from human cell line KG-1.</title>
        <authorList>
            <person name="Nagase T."/>
            <person name="Miyajima N."/>
            <person name="Tanaka A."/>
            <person name="Sazuka T."/>
            <person name="Seki N."/>
            <person name="Sato S."/>
            <person name="Tabata S."/>
            <person name="Ishikawa K."/>
            <person name="Kawarabayasi Y."/>
            <person name="Kotani H."/>
            <person name="Nomura N."/>
        </authorList>
    </citation>
    <scope>NUCLEOTIDE SEQUENCE [LARGE SCALE MRNA]</scope>
    <source>
        <tissue>Bone marrow</tissue>
    </source>
</reference>
<reference key="2">
    <citation type="journal article" date="2004" name="Nat. Genet.">
        <title>Complete sequencing and characterization of 21,243 full-length human cDNAs.</title>
        <authorList>
            <person name="Ota T."/>
            <person name="Suzuki Y."/>
            <person name="Nishikawa T."/>
            <person name="Otsuki T."/>
            <person name="Sugiyama T."/>
            <person name="Irie R."/>
            <person name="Wakamatsu A."/>
            <person name="Hayashi K."/>
            <person name="Sato H."/>
            <person name="Nagai K."/>
            <person name="Kimura K."/>
            <person name="Makita H."/>
            <person name="Sekine M."/>
            <person name="Obayashi M."/>
            <person name="Nishi T."/>
            <person name="Shibahara T."/>
            <person name="Tanaka T."/>
            <person name="Ishii S."/>
            <person name="Yamamoto J."/>
            <person name="Saito K."/>
            <person name="Kawai Y."/>
            <person name="Isono Y."/>
            <person name="Nakamura Y."/>
            <person name="Nagahari K."/>
            <person name="Murakami K."/>
            <person name="Yasuda T."/>
            <person name="Iwayanagi T."/>
            <person name="Wagatsuma M."/>
            <person name="Shiratori A."/>
            <person name="Sudo H."/>
            <person name="Hosoiri T."/>
            <person name="Kaku Y."/>
            <person name="Kodaira H."/>
            <person name="Kondo H."/>
            <person name="Sugawara M."/>
            <person name="Takahashi M."/>
            <person name="Kanda K."/>
            <person name="Yokoi T."/>
            <person name="Furuya T."/>
            <person name="Kikkawa E."/>
            <person name="Omura Y."/>
            <person name="Abe K."/>
            <person name="Kamihara K."/>
            <person name="Katsuta N."/>
            <person name="Sato K."/>
            <person name="Tanikawa M."/>
            <person name="Yamazaki M."/>
            <person name="Ninomiya K."/>
            <person name="Ishibashi T."/>
            <person name="Yamashita H."/>
            <person name="Murakawa K."/>
            <person name="Fujimori K."/>
            <person name="Tanai H."/>
            <person name="Kimata M."/>
            <person name="Watanabe M."/>
            <person name="Hiraoka S."/>
            <person name="Chiba Y."/>
            <person name="Ishida S."/>
            <person name="Ono Y."/>
            <person name="Takiguchi S."/>
            <person name="Watanabe S."/>
            <person name="Yosida M."/>
            <person name="Hotuta T."/>
            <person name="Kusano J."/>
            <person name="Kanehori K."/>
            <person name="Takahashi-Fujii A."/>
            <person name="Hara H."/>
            <person name="Tanase T.-O."/>
            <person name="Nomura Y."/>
            <person name="Togiya S."/>
            <person name="Komai F."/>
            <person name="Hara R."/>
            <person name="Takeuchi K."/>
            <person name="Arita M."/>
            <person name="Imose N."/>
            <person name="Musashino K."/>
            <person name="Yuuki H."/>
            <person name="Oshima A."/>
            <person name="Sasaki N."/>
            <person name="Aotsuka S."/>
            <person name="Yoshikawa Y."/>
            <person name="Matsunawa H."/>
            <person name="Ichihara T."/>
            <person name="Shiohata N."/>
            <person name="Sano S."/>
            <person name="Moriya S."/>
            <person name="Momiyama H."/>
            <person name="Satoh N."/>
            <person name="Takami S."/>
            <person name="Terashima Y."/>
            <person name="Suzuki O."/>
            <person name="Nakagawa S."/>
            <person name="Senoh A."/>
            <person name="Mizoguchi H."/>
            <person name="Goto Y."/>
            <person name="Shimizu F."/>
            <person name="Wakebe H."/>
            <person name="Hishigaki H."/>
            <person name="Watanabe T."/>
            <person name="Sugiyama A."/>
            <person name="Takemoto M."/>
            <person name="Kawakami B."/>
            <person name="Yamazaki M."/>
            <person name="Watanabe K."/>
            <person name="Kumagai A."/>
            <person name="Itakura S."/>
            <person name="Fukuzumi Y."/>
            <person name="Fujimori Y."/>
            <person name="Komiyama M."/>
            <person name="Tashiro H."/>
            <person name="Tanigami A."/>
            <person name="Fujiwara T."/>
            <person name="Ono T."/>
            <person name="Yamada K."/>
            <person name="Fujii Y."/>
            <person name="Ozaki K."/>
            <person name="Hirao M."/>
            <person name="Ohmori Y."/>
            <person name="Kawabata A."/>
            <person name="Hikiji T."/>
            <person name="Kobatake N."/>
            <person name="Inagaki H."/>
            <person name="Ikema Y."/>
            <person name="Okamoto S."/>
            <person name="Okitani R."/>
            <person name="Kawakami T."/>
            <person name="Noguchi S."/>
            <person name="Itoh T."/>
            <person name="Shigeta K."/>
            <person name="Senba T."/>
            <person name="Matsumura K."/>
            <person name="Nakajima Y."/>
            <person name="Mizuno T."/>
            <person name="Morinaga M."/>
            <person name="Sasaki M."/>
            <person name="Togashi T."/>
            <person name="Oyama M."/>
            <person name="Hata H."/>
            <person name="Watanabe M."/>
            <person name="Komatsu T."/>
            <person name="Mizushima-Sugano J."/>
            <person name="Satoh T."/>
            <person name="Shirai Y."/>
            <person name="Takahashi Y."/>
            <person name="Nakagawa K."/>
            <person name="Okumura K."/>
            <person name="Nagase T."/>
            <person name="Nomura N."/>
            <person name="Kikuchi H."/>
            <person name="Masuho Y."/>
            <person name="Yamashita R."/>
            <person name="Nakai K."/>
            <person name="Yada T."/>
            <person name="Nakamura Y."/>
            <person name="Ohara O."/>
            <person name="Isogai T."/>
            <person name="Sugano S."/>
        </authorList>
    </citation>
    <scope>NUCLEOTIDE SEQUENCE [LARGE SCALE MRNA]</scope>
    <source>
        <tissue>Trachea</tissue>
    </source>
</reference>
<reference key="3">
    <citation type="submission" date="2005-07" db="EMBL/GenBank/DDBJ databases">
        <authorList>
            <person name="Mural R.J."/>
            <person name="Istrail S."/>
            <person name="Sutton G.G."/>
            <person name="Florea L."/>
            <person name="Halpern A.L."/>
            <person name="Mobarry C.M."/>
            <person name="Lippert R."/>
            <person name="Walenz B."/>
            <person name="Shatkay H."/>
            <person name="Dew I."/>
            <person name="Miller J.R."/>
            <person name="Flanigan M.J."/>
            <person name="Edwards N.J."/>
            <person name="Bolanos R."/>
            <person name="Fasulo D."/>
            <person name="Halldorsson B.V."/>
            <person name="Hannenhalli S."/>
            <person name="Turner R."/>
            <person name="Yooseph S."/>
            <person name="Lu F."/>
            <person name="Nusskern D.R."/>
            <person name="Shue B.C."/>
            <person name="Zheng X.H."/>
            <person name="Zhong F."/>
            <person name="Delcher A.L."/>
            <person name="Huson D.H."/>
            <person name="Kravitz S.A."/>
            <person name="Mouchard L."/>
            <person name="Reinert K."/>
            <person name="Remington K.A."/>
            <person name="Clark A.G."/>
            <person name="Waterman M.S."/>
            <person name="Eichler E.E."/>
            <person name="Adams M.D."/>
            <person name="Hunkapiller M.W."/>
            <person name="Myers E.W."/>
            <person name="Venter J.C."/>
        </authorList>
    </citation>
    <scope>NUCLEOTIDE SEQUENCE [LARGE SCALE GENOMIC DNA]</scope>
</reference>
<reference key="4">
    <citation type="journal article" date="2004" name="Genome Res.">
        <title>The status, quality, and expansion of the NIH full-length cDNA project: the Mammalian Gene Collection (MGC).</title>
        <authorList>
            <consortium name="The MGC Project Team"/>
        </authorList>
    </citation>
    <scope>NUCLEOTIDE SEQUENCE [LARGE SCALE MRNA] OF 110-386</scope>
    <source>
        <tissue>Placenta</tissue>
    </source>
</reference>
<reference key="5">
    <citation type="journal article" date="2009" name="Anal. Chem.">
        <title>Lys-N and trypsin cover complementary parts of the phosphoproteome in a refined SCX-based approach.</title>
        <authorList>
            <person name="Gauci S."/>
            <person name="Helbig A.O."/>
            <person name="Slijper M."/>
            <person name="Krijgsveld J."/>
            <person name="Heck A.J."/>
            <person name="Mohammed S."/>
        </authorList>
    </citation>
    <scope>ACETYLATION [LARGE SCALE ANALYSIS] AT ALA-2</scope>
    <scope>CLEAVAGE OF INITIATOR METHIONINE [LARGE SCALE ANALYSIS]</scope>
    <scope>IDENTIFICATION BY MASS SPECTROMETRY [LARGE SCALE ANALYSIS]</scope>
</reference>
<reference key="6">
    <citation type="journal article" date="2011" name="BMC Syst. Biol.">
        <title>Initial characterization of the human central proteome.</title>
        <authorList>
            <person name="Burkard T.R."/>
            <person name="Planyavsky M."/>
            <person name="Kaupe I."/>
            <person name="Breitwieser F.P."/>
            <person name="Buerckstuemmer T."/>
            <person name="Bennett K.L."/>
            <person name="Superti-Furga G."/>
            <person name="Colinge J."/>
        </authorList>
    </citation>
    <scope>IDENTIFICATION BY MASS SPECTROMETRY [LARGE SCALE ANALYSIS]</scope>
</reference>
<reference key="7">
    <citation type="journal article" date="2014" name="J. Proteomics">
        <title>An enzyme assisted RP-RPLC approach for in-depth analysis of human liver phosphoproteome.</title>
        <authorList>
            <person name="Bian Y."/>
            <person name="Song C."/>
            <person name="Cheng K."/>
            <person name="Dong M."/>
            <person name="Wang F."/>
            <person name="Huang J."/>
            <person name="Sun D."/>
            <person name="Wang L."/>
            <person name="Ye M."/>
            <person name="Zou H."/>
        </authorList>
    </citation>
    <scope>IDENTIFICATION BY MASS SPECTROMETRY [LARGE SCALE ANALYSIS]</scope>
    <source>
        <tissue>Liver</tissue>
    </source>
</reference>
<reference key="8">
    <citation type="journal article" date="2015" name="Proteomics">
        <title>N-terminome analysis of the human mitochondrial proteome.</title>
        <authorList>
            <person name="Vaca Jacome A.S."/>
            <person name="Rabilloud T."/>
            <person name="Schaeffer-Reiss C."/>
            <person name="Rompais M."/>
            <person name="Ayoub D."/>
            <person name="Lane L."/>
            <person name="Bairoch A."/>
            <person name="Van Dorsselaer A."/>
            <person name="Carapito C."/>
        </authorList>
    </citation>
    <scope>IDENTIFICATION BY MASS SPECTROMETRY [LARGE SCALE ANALYSIS]</scope>
</reference>
<reference key="9">
    <citation type="journal article" date="2005" name="Biochemistry">
        <title>Structural basis for the functional differences between type I and type II human methionine aminopeptidases.</title>
        <authorList>
            <person name="Addlagatta A."/>
            <person name="Hu X."/>
            <person name="Liu J.O."/>
            <person name="Matthews B.W."/>
        </authorList>
    </citation>
    <scope>X-RAY CRYSTALLOGRAPHY (1.1 ANGSTROMS) OF 81-384 IN COMPLEX WITH COBALT IONS</scope>
    <scope>FUNCTION</scope>
    <scope>COFACTOR</scope>
</reference>
<reference key="10">
    <citation type="journal article" date="2006" name="Angew. Chem. Int. Ed.">
        <title>Identification of pyridinylpyrimidines as inhibitors of human methionine aminopeptidases.</title>
        <authorList>
            <person name="Hu X."/>
            <person name="Addlagatta A."/>
            <person name="Matthews B.W."/>
            <person name="Liu J.O."/>
        </authorList>
    </citation>
    <scope>X-RAY CRYSTALLOGRAPHY (1.9 ANGSTROMS) OF 81-384 IN COMPLEX WITH COBALT IONS AND INHIBITORS</scope>
</reference>
<reference key="11">
    <citation type="journal article" date="2006" name="Proc. Natl. Acad. Sci. U.S.A.">
        <title>Elucidation of the function of type 1 human methionine aminopeptidase during cell cycle progression.</title>
        <authorList>
            <person name="Hu X."/>
            <person name="Addlagatta A."/>
            <person name="Lu J."/>
            <person name="Matthews B.W."/>
            <person name="Liu J.O."/>
        </authorList>
    </citation>
    <scope>X-RAY CRYSTALLOGRAPHY (1.5 ANGSTROMS) OF 81-384 IN COMPLEX WITH COBALT IONS AND INHIBITORS</scope>
    <scope>CATALYTIC ACTIVITY</scope>
    <scope>FUNCTION</scope>
</reference>
<reference key="12">
    <citation type="journal article" date="2006" name="Protein Sci.">
        <title>Structure of the angiogenesis inhibitor ovalicin bound to its noncognate target, human Type 1 methionine aminopeptidase.</title>
        <authorList>
            <person name="Addlagatta A."/>
            <person name="Matthews B.W."/>
        </authorList>
    </citation>
    <scope>X-RAY CRYSTALLOGRAPHY (1.1 ANGSTROMS) OF 81-384 IN COMPLEX WITH COBALT IONS AND THE INHIBITOR OVALICIN</scope>
</reference>
<keyword id="KW-0002">3D-structure</keyword>
<keyword id="KW-0007">Acetylation</keyword>
<keyword id="KW-0031">Aminopeptidase</keyword>
<keyword id="KW-0963">Cytoplasm</keyword>
<keyword id="KW-0378">Hydrolase</keyword>
<keyword id="KW-0479">Metal-binding</keyword>
<keyword id="KW-0645">Protease</keyword>
<keyword id="KW-1267">Proteomics identification</keyword>
<keyword id="KW-1185">Reference proteome</keyword>
<keyword id="KW-0862">Zinc</keyword>
<keyword id="KW-0863">Zinc-finger</keyword>
<accession>P53582</accession>
<accession>B4E2E6</accession>
<proteinExistence type="evidence at protein level"/>
<evidence type="ECO:0000255" key="1">
    <source>
        <dbReference type="HAMAP-Rule" id="MF_03174"/>
    </source>
</evidence>
<evidence type="ECO:0000255" key="2">
    <source>
        <dbReference type="PROSITE-ProRule" id="PRU01357"/>
    </source>
</evidence>
<evidence type="ECO:0000269" key="3">
    <source>
    </source>
</evidence>
<evidence type="ECO:0000269" key="4">
    <source>
    </source>
</evidence>
<evidence type="ECO:0000269" key="5">
    <source>
    </source>
</evidence>
<evidence type="ECO:0000269" key="6">
    <source>
    </source>
</evidence>
<evidence type="ECO:0000305" key="7"/>
<evidence type="ECO:0007744" key="8">
    <source>
    </source>
</evidence>
<evidence type="ECO:0007829" key="9">
    <source>
        <dbReference type="PDB" id="2B3H"/>
    </source>
</evidence>
<sequence>MAAVETRVCETDGCSSEAKLQCPTCIKLGIQGSYFCSQECFKGSWATHKLLHKKAKDEKAKREVSSWTVEGDINTDPWAGYRYTGKLRPHYPLMPTRPVPSYIQRPDYADHPLGMSESEQALKGTSQIKLLSSEDIEGMRLVCRLAREVLDVAAGMIKPGVTTEEIDHAVHLACIARNCYPSPLNYYNFPKSCCTSVNEVICHGIPDRRPLQEGDIVNVDITLYRNGYHGDLNETFFVGEVDDGARKLVQTTYECLMQAIDAVKPGVRYRELGNIIQKHAQANGFSVVRSYCGHGIHKLFHTAPNVPHYAKNKAVGVMKSGHVFTIEPMICEGGWQDETWPDGWTAVTRDGKRSAQFEHTLLVTDTGCEILTRRLDSARPHFMSQF</sequence>
<dbReference type="EC" id="3.4.11.18" evidence="1"/>
<dbReference type="EMBL" id="D42084">
    <property type="protein sequence ID" value="BAA07679.1"/>
    <property type="status" value="ALT_INIT"/>
    <property type="molecule type" value="mRNA"/>
</dbReference>
<dbReference type="EMBL" id="AK304239">
    <property type="protein sequence ID" value="BAG65108.1"/>
    <property type="molecule type" value="mRNA"/>
</dbReference>
<dbReference type="EMBL" id="CH471057">
    <property type="protein sequence ID" value="EAX06083.1"/>
    <property type="molecule type" value="Genomic_DNA"/>
</dbReference>
<dbReference type="EMBL" id="BC030054">
    <property type="protein sequence ID" value="AAH30054.1"/>
    <property type="status" value="ALT_INIT"/>
    <property type="molecule type" value="mRNA"/>
</dbReference>
<dbReference type="CCDS" id="CCDS47110.1"/>
<dbReference type="RefSeq" id="NP_055958.2">
    <property type="nucleotide sequence ID" value="NM_015143.3"/>
</dbReference>
<dbReference type="PDB" id="2B3H">
    <property type="method" value="X-ray"/>
    <property type="resolution" value="1.10 A"/>
    <property type="chains" value="A=81-384"/>
</dbReference>
<dbReference type="PDB" id="2B3K">
    <property type="method" value="X-ray"/>
    <property type="resolution" value="1.55 A"/>
    <property type="chains" value="A=81-384"/>
</dbReference>
<dbReference type="PDB" id="2B3L">
    <property type="method" value="X-ray"/>
    <property type="resolution" value="1.50 A"/>
    <property type="chains" value="A=81-384"/>
</dbReference>
<dbReference type="PDB" id="2G6P">
    <property type="method" value="X-ray"/>
    <property type="resolution" value="1.90 A"/>
    <property type="chains" value="A=81-384"/>
</dbReference>
<dbReference type="PDB" id="2GZ5">
    <property type="method" value="X-ray"/>
    <property type="resolution" value="1.10 A"/>
    <property type="chains" value="A=81-384"/>
</dbReference>
<dbReference type="PDB" id="2NQ6">
    <property type="method" value="X-ray"/>
    <property type="resolution" value="1.50 A"/>
    <property type="chains" value="A=81-384"/>
</dbReference>
<dbReference type="PDB" id="2NQ7">
    <property type="method" value="X-ray"/>
    <property type="resolution" value="1.60 A"/>
    <property type="chains" value="A=81-384"/>
</dbReference>
<dbReference type="PDB" id="4FLI">
    <property type="method" value="X-ray"/>
    <property type="resolution" value="1.55 A"/>
    <property type="chains" value="A=81-386"/>
</dbReference>
<dbReference type="PDB" id="4FLJ">
    <property type="method" value="X-ray"/>
    <property type="resolution" value="1.74 A"/>
    <property type="chains" value="A=81-386"/>
</dbReference>
<dbReference type="PDB" id="4FLK">
    <property type="method" value="X-ray"/>
    <property type="resolution" value="1.47 A"/>
    <property type="chains" value="A=81-386"/>
</dbReference>
<dbReference type="PDB" id="4FLL">
    <property type="method" value="X-ray"/>
    <property type="resolution" value="1.50 A"/>
    <property type="chains" value="A=81-386"/>
</dbReference>
<dbReference type="PDB" id="4HXX">
    <property type="method" value="X-ray"/>
    <property type="resolution" value="2.09 A"/>
    <property type="chains" value="A=81-384"/>
</dbReference>
<dbReference type="PDB" id="4IKR">
    <property type="method" value="X-ray"/>
    <property type="resolution" value="1.78 A"/>
    <property type="chains" value="A=81-384"/>
</dbReference>
<dbReference type="PDB" id="4IKS">
    <property type="method" value="X-ray"/>
    <property type="resolution" value="1.70 A"/>
    <property type="chains" value="A=81-384"/>
</dbReference>
<dbReference type="PDB" id="4IKT">
    <property type="method" value="X-ray"/>
    <property type="resolution" value="1.60 A"/>
    <property type="chains" value="A=81-384"/>
</dbReference>
<dbReference type="PDB" id="4IKU">
    <property type="method" value="X-ray"/>
    <property type="resolution" value="1.30 A"/>
    <property type="chains" value="A=81-384"/>
</dbReference>
<dbReference type="PDB" id="4IU6">
    <property type="method" value="X-ray"/>
    <property type="resolution" value="1.90 A"/>
    <property type="chains" value="A=1-384"/>
</dbReference>
<dbReference type="PDB" id="4U1B">
    <property type="method" value="X-ray"/>
    <property type="resolution" value="1.89 A"/>
    <property type="chains" value="A=81-386"/>
</dbReference>
<dbReference type="PDB" id="4U69">
    <property type="method" value="X-ray"/>
    <property type="resolution" value="1.60 A"/>
    <property type="chains" value="A=81-386"/>
</dbReference>
<dbReference type="PDB" id="4U6C">
    <property type="method" value="X-ray"/>
    <property type="resolution" value="1.91 A"/>
    <property type="chains" value="A=81-386"/>
</dbReference>
<dbReference type="PDB" id="4U6E">
    <property type="method" value="X-ray"/>
    <property type="resolution" value="1.90 A"/>
    <property type="chains" value="A=81-386"/>
</dbReference>
<dbReference type="PDB" id="4U6J">
    <property type="method" value="X-ray"/>
    <property type="resolution" value="1.56 A"/>
    <property type="chains" value="A=81-386"/>
</dbReference>
<dbReference type="PDB" id="4U6W">
    <property type="method" value="X-ray"/>
    <property type="resolution" value="1.83 A"/>
    <property type="chains" value="A=81-386"/>
</dbReference>
<dbReference type="PDB" id="4U6Z">
    <property type="method" value="X-ray"/>
    <property type="resolution" value="1.80 A"/>
    <property type="chains" value="A=81-386"/>
</dbReference>
<dbReference type="PDB" id="4U70">
    <property type="method" value="X-ray"/>
    <property type="resolution" value="1.60 A"/>
    <property type="chains" value="A=81-386"/>
</dbReference>
<dbReference type="PDB" id="4U71">
    <property type="method" value="X-ray"/>
    <property type="resolution" value="1.80 A"/>
    <property type="chains" value="A=81-386"/>
</dbReference>
<dbReference type="PDB" id="4U73">
    <property type="method" value="X-ray"/>
    <property type="resolution" value="1.80 A"/>
    <property type="chains" value="A=81-386"/>
</dbReference>
<dbReference type="PDB" id="4U75">
    <property type="method" value="X-ray"/>
    <property type="resolution" value="1.94 A"/>
    <property type="chains" value="A=81-386"/>
</dbReference>
<dbReference type="PDB" id="4U76">
    <property type="method" value="X-ray"/>
    <property type="resolution" value="1.87 A"/>
    <property type="chains" value="A=81-386"/>
</dbReference>
<dbReference type="PDB" id="5YKP">
    <property type="method" value="X-ray"/>
    <property type="resolution" value="1.68 A"/>
    <property type="chains" value="A=81-384"/>
</dbReference>
<dbReference type="PDB" id="5YR4">
    <property type="method" value="X-ray"/>
    <property type="resolution" value="1.82 A"/>
    <property type="chains" value="A=81-384"/>
</dbReference>
<dbReference type="PDB" id="5YR5">
    <property type="method" value="X-ray"/>
    <property type="resolution" value="1.60 A"/>
    <property type="chains" value="A=81-384"/>
</dbReference>
<dbReference type="PDB" id="5YR6">
    <property type="method" value="X-ray"/>
    <property type="resolution" value="1.75 A"/>
    <property type="chains" value="A=81-384"/>
</dbReference>
<dbReference type="PDB" id="5YR7">
    <property type="method" value="X-ray"/>
    <property type="resolution" value="2.06 A"/>
    <property type="chains" value="A=81-386"/>
</dbReference>
<dbReference type="PDB" id="6LZB">
    <property type="method" value="X-ray"/>
    <property type="resolution" value="1.29 A"/>
    <property type="chains" value="A=81-384"/>
</dbReference>
<dbReference type="PDB" id="6LZC">
    <property type="method" value="X-ray"/>
    <property type="resolution" value="1.35 A"/>
    <property type="chains" value="A=81-384"/>
</dbReference>
<dbReference type="PDB" id="8P2K">
    <property type="method" value="EM"/>
    <property type="resolution" value="2.90 A"/>
    <property type="chains" value="MA=1-386"/>
</dbReference>
<dbReference type="PDB" id="9F1C">
    <property type="method" value="EM"/>
    <property type="resolution" value="3.78 A"/>
    <property type="chains" value="EA=1-386"/>
</dbReference>
<dbReference type="PDB" id="9F1D">
    <property type="method" value="EM"/>
    <property type="resolution" value="3.26 A"/>
    <property type="chains" value="EA=1-386"/>
</dbReference>
<dbReference type="PDB" id="9FQ0">
    <property type="method" value="EM"/>
    <property type="resolution" value="4.67 A"/>
    <property type="chains" value="E=1-386"/>
</dbReference>
<dbReference type="PDBsum" id="2B3H"/>
<dbReference type="PDBsum" id="2B3K"/>
<dbReference type="PDBsum" id="2B3L"/>
<dbReference type="PDBsum" id="2G6P"/>
<dbReference type="PDBsum" id="2GZ5"/>
<dbReference type="PDBsum" id="2NQ6"/>
<dbReference type="PDBsum" id="2NQ7"/>
<dbReference type="PDBsum" id="4FLI"/>
<dbReference type="PDBsum" id="4FLJ"/>
<dbReference type="PDBsum" id="4FLK"/>
<dbReference type="PDBsum" id="4FLL"/>
<dbReference type="PDBsum" id="4HXX"/>
<dbReference type="PDBsum" id="4IKR"/>
<dbReference type="PDBsum" id="4IKS"/>
<dbReference type="PDBsum" id="4IKT"/>
<dbReference type="PDBsum" id="4IKU"/>
<dbReference type="PDBsum" id="4IU6"/>
<dbReference type="PDBsum" id="4U1B"/>
<dbReference type="PDBsum" id="4U69"/>
<dbReference type="PDBsum" id="4U6C"/>
<dbReference type="PDBsum" id="4U6E"/>
<dbReference type="PDBsum" id="4U6J"/>
<dbReference type="PDBsum" id="4U6W"/>
<dbReference type="PDBsum" id="4U6Z"/>
<dbReference type="PDBsum" id="4U70"/>
<dbReference type="PDBsum" id="4U71"/>
<dbReference type="PDBsum" id="4U73"/>
<dbReference type="PDBsum" id="4U75"/>
<dbReference type="PDBsum" id="4U76"/>
<dbReference type="PDBsum" id="5YKP"/>
<dbReference type="PDBsum" id="5YR4"/>
<dbReference type="PDBsum" id="5YR5"/>
<dbReference type="PDBsum" id="5YR6"/>
<dbReference type="PDBsum" id="5YR7"/>
<dbReference type="PDBsum" id="6LZB"/>
<dbReference type="PDBsum" id="6LZC"/>
<dbReference type="PDBsum" id="8P2K"/>
<dbReference type="PDBsum" id="9F1C"/>
<dbReference type="PDBsum" id="9F1D"/>
<dbReference type="PDBsum" id="9FQ0"/>
<dbReference type="EMDB" id="EMD-17367"/>
<dbReference type="EMDB" id="EMD-50125"/>
<dbReference type="EMDB" id="EMD-50126"/>
<dbReference type="EMDB" id="EMD-50642"/>
<dbReference type="SMR" id="P53582"/>
<dbReference type="BioGRID" id="116785">
    <property type="interactions" value="55"/>
</dbReference>
<dbReference type="FunCoup" id="P53582">
    <property type="interactions" value="2696"/>
</dbReference>
<dbReference type="IntAct" id="P53582">
    <property type="interactions" value="34"/>
</dbReference>
<dbReference type="MINT" id="P53582"/>
<dbReference type="STRING" id="9606.ENSP00000296411"/>
<dbReference type="BindingDB" id="P53582"/>
<dbReference type="ChEMBL" id="CHEMBL2474"/>
<dbReference type="DrugBank" id="DB07903">
    <property type="generic name" value="3-[(2,2-DIMETHYLPROPANOYL)AMINO]-N-1,3-THIAZOL-2-YLPYRIDINE-2-CARBOXAMIDE"/>
</dbReference>
<dbReference type="DrugBank" id="DB07901">
    <property type="generic name" value="5-CHLORO-6-METHYL-N-(2-PHENYLETHYL)-2-PYRIDIN-2-YLPYRIMIDIN-4-AMINE"/>
</dbReference>
<dbReference type="DrugBank" id="DB04324">
    <property type="generic name" value="Ovalicin"/>
</dbReference>
<dbReference type="DrugBank" id="DB07902">
    <property type="generic name" value="TERT-BUTYL {2-[(1,3-THIAZOL-2-YLAMINO)CARBONYL]PYRIDIN-3-YL}CARBAMATE"/>
</dbReference>
<dbReference type="DrugCentral" id="P53582"/>
<dbReference type="GuidetoPHARMACOLOGY" id="1572"/>
<dbReference type="MEROPS" id="M24.017"/>
<dbReference type="GlyGen" id="P53582">
    <property type="glycosylation" value="1 site, 1 O-linked glycan (1 site)"/>
</dbReference>
<dbReference type="iPTMnet" id="P53582"/>
<dbReference type="PhosphoSitePlus" id="P53582"/>
<dbReference type="SwissPalm" id="P53582"/>
<dbReference type="BioMuta" id="METAP1"/>
<dbReference type="DMDM" id="33302602"/>
<dbReference type="jPOST" id="P53582"/>
<dbReference type="MassIVE" id="P53582"/>
<dbReference type="PaxDb" id="9606-ENSP00000296411"/>
<dbReference type="PeptideAtlas" id="P53582"/>
<dbReference type="ProteomicsDB" id="56586"/>
<dbReference type="Pumba" id="P53582"/>
<dbReference type="Antibodypedia" id="25840">
    <property type="antibodies" value="196 antibodies from 25 providers"/>
</dbReference>
<dbReference type="DNASU" id="23173"/>
<dbReference type="Ensembl" id="ENST00000296411.11">
    <property type="protein sequence ID" value="ENSP00000296411.6"/>
    <property type="gene ID" value="ENSG00000164024.12"/>
</dbReference>
<dbReference type="GeneID" id="23173"/>
<dbReference type="KEGG" id="hsa:23173"/>
<dbReference type="MANE-Select" id="ENST00000296411.11">
    <property type="protein sequence ID" value="ENSP00000296411.6"/>
    <property type="RefSeq nucleotide sequence ID" value="NM_015143.3"/>
    <property type="RefSeq protein sequence ID" value="NP_055958.2"/>
</dbReference>
<dbReference type="UCSC" id="uc003huf.5">
    <property type="organism name" value="human"/>
</dbReference>
<dbReference type="AGR" id="HGNC:15789"/>
<dbReference type="CTD" id="23173"/>
<dbReference type="DisGeNET" id="23173"/>
<dbReference type="GeneCards" id="METAP1"/>
<dbReference type="HGNC" id="HGNC:15789">
    <property type="gene designation" value="METAP1"/>
</dbReference>
<dbReference type="HPA" id="ENSG00000164024">
    <property type="expression patterns" value="Low tissue specificity"/>
</dbReference>
<dbReference type="MIM" id="610151">
    <property type="type" value="gene"/>
</dbReference>
<dbReference type="neXtProt" id="NX_P53582"/>
<dbReference type="OpenTargets" id="ENSG00000164024"/>
<dbReference type="PharmGKB" id="PA30764"/>
<dbReference type="VEuPathDB" id="HostDB:ENSG00000164024"/>
<dbReference type="eggNOG" id="KOG2738">
    <property type="taxonomic scope" value="Eukaryota"/>
</dbReference>
<dbReference type="GeneTree" id="ENSGT00940000158205"/>
<dbReference type="HOGENOM" id="CLU_015857_2_1_1"/>
<dbReference type="InParanoid" id="P53582"/>
<dbReference type="OMA" id="FYGDHAY"/>
<dbReference type="OrthoDB" id="3209743at2759"/>
<dbReference type="PAN-GO" id="P53582">
    <property type="GO annotations" value="3 GO annotations based on evolutionary models"/>
</dbReference>
<dbReference type="PhylomeDB" id="P53582"/>
<dbReference type="TreeFam" id="TF105753"/>
<dbReference type="BioCyc" id="MetaCyc:HS08982-MONOMER"/>
<dbReference type="BRENDA" id="3.4.11.18">
    <property type="organism ID" value="2681"/>
</dbReference>
<dbReference type="PathwayCommons" id="P53582"/>
<dbReference type="Reactome" id="R-HSA-2514859">
    <property type="pathway name" value="Inactivation, recovery and regulation of the phototransduction cascade"/>
</dbReference>
<dbReference type="SABIO-RK" id="P53582"/>
<dbReference type="SignaLink" id="P53582"/>
<dbReference type="BioGRID-ORCS" id="23173">
    <property type="hits" value="467 hits in 1177 CRISPR screens"/>
</dbReference>
<dbReference type="CD-CODE" id="91857CE7">
    <property type="entry name" value="Nucleolus"/>
</dbReference>
<dbReference type="ChiTaRS" id="METAP1">
    <property type="organism name" value="human"/>
</dbReference>
<dbReference type="EvolutionaryTrace" id="P53582"/>
<dbReference type="GeneWiki" id="METAP1"/>
<dbReference type="GenomeRNAi" id="23173"/>
<dbReference type="Pharos" id="P53582">
    <property type="development level" value="Tchem"/>
</dbReference>
<dbReference type="PRO" id="PR:P53582"/>
<dbReference type="Proteomes" id="UP000005640">
    <property type="component" value="Chromosome 4"/>
</dbReference>
<dbReference type="RNAct" id="P53582">
    <property type="molecule type" value="protein"/>
</dbReference>
<dbReference type="Bgee" id="ENSG00000164024">
    <property type="expression patterns" value="Expressed in esophagus squamous epithelium and 209 other cell types or tissues"/>
</dbReference>
<dbReference type="ExpressionAtlas" id="P53582">
    <property type="expression patterns" value="baseline and differential"/>
</dbReference>
<dbReference type="GO" id="GO:0005737">
    <property type="term" value="C:cytoplasm"/>
    <property type="evidence" value="ECO:0000304"/>
    <property type="project" value="HGNC-UCL"/>
</dbReference>
<dbReference type="GO" id="GO:0005829">
    <property type="term" value="C:cytosol"/>
    <property type="evidence" value="ECO:0000318"/>
    <property type="project" value="GO_Central"/>
</dbReference>
<dbReference type="GO" id="GO:0022626">
    <property type="term" value="C:cytosolic ribosome"/>
    <property type="evidence" value="ECO:0007669"/>
    <property type="project" value="UniProtKB-UniRule"/>
</dbReference>
<dbReference type="GO" id="GO:0004177">
    <property type="term" value="F:aminopeptidase activity"/>
    <property type="evidence" value="ECO:0000314"/>
    <property type="project" value="UniProt"/>
</dbReference>
<dbReference type="GO" id="GO:0004239">
    <property type="term" value="F:initiator methionyl aminopeptidase activity"/>
    <property type="evidence" value="ECO:0007669"/>
    <property type="project" value="UniProtKB-UniRule"/>
</dbReference>
<dbReference type="GO" id="GO:0070006">
    <property type="term" value="F:metalloaminopeptidase activity"/>
    <property type="evidence" value="ECO:0000318"/>
    <property type="project" value="GO_Central"/>
</dbReference>
<dbReference type="GO" id="GO:0008235">
    <property type="term" value="F:metalloexopeptidase activity"/>
    <property type="evidence" value="ECO:0000304"/>
    <property type="project" value="UniProtKB"/>
</dbReference>
<dbReference type="GO" id="GO:0008270">
    <property type="term" value="F:zinc ion binding"/>
    <property type="evidence" value="ECO:0007669"/>
    <property type="project" value="UniProtKB-KW"/>
</dbReference>
<dbReference type="GO" id="GO:0070527">
    <property type="term" value="P:platelet aggregation"/>
    <property type="evidence" value="ECO:0007001"/>
    <property type="project" value="UniProtKB"/>
</dbReference>
<dbReference type="GO" id="GO:0051604">
    <property type="term" value="P:protein maturation"/>
    <property type="evidence" value="ECO:0000314"/>
    <property type="project" value="UniProt"/>
</dbReference>
<dbReference type="GO" id="GO:0006508">
    <property type="term" value="P:proteolysis"/>
    <property type="evidence" value="ECO:0007669"/>
    <property type="project" value="UniProtKB-KW"/>
</dbReference>
<dbReference type="GO" id="GO:0006417">
    <property type="term" value="P:regulation of translation"/>
    <property type="evidence" value="ECO:0000304"/>
    <property type="project" value="HGNC-UCL"/>
</dbReference>
<dbReference type="CDD" id="cd01086">
    <property type="entry name" value="MetAP1"/>
    <property type="match status" value="1"/>
</dbReference>
<dbReference type="FunFam" id="3.90.230.10:FF:000010">
    <property type="entry name" value="Methionine aminopeptidase"/>
    <property type="match status" value="1"/>
</dbReference>
<dbReference type="Gene3D" id="3.90.230.10">
    <property type="entry name" value="Creatinase/methionine aminopeptidase superfamily"/>
    <property type="match status" value="1"/>
</dbReference>
<dbReference type="HAMAP" id="MF_01974">
    <property type="entry name" value="MetAP_1"/>
    <property type="match status" value="1"/>
</dbReference>
<dbReference type="InterPro" id="IPR036005">
    <property type="entry name" value="Creatinase/aminopeptidase-like"/>
</dbReference>
<dbReference type="InterPro" id="IPR000994">
    <property type="entry name" value="Pept_M24"/>
</dbReference>
<dbReference type="InterPro" id="IPR001714">
    <property type="entry name" value="Pept_M24_MAP"/>
</dbReference>
<dbReference type="InterPro" id="IPR002467">
    <property type="entry name" value="Pept_M24A_MAP1"/>
</dbReference>
<dbReference type="InterPro" id="IPR031615">
    <property type="entry name" value="Zfn-C6H2"/>
</dbReference>
<dbReference type="NCBIfam" id="TIGR00500">
    <property type="entry name" value="met_pdase_I"/>
    <property type="match status" value="1"/>
</dbReference>
<dbReference type="PANTHER" id="PTHR43330">
    <property type="entry name" value="METHIONINE AMINOPEPTIDASE"/>
    <property type="match status" value="1"/>
</dbReference>
<dbReference type="PANTHER" id="PTHR43330:SF7">
    <property type="entry name" value="METHIONINE AMINOPEPTIDASE 1"/>
    <property type="match status" value="1"/>
</dbReference>
<dbReference type="Pfam" id="PF00557">
    <property type="entry name" value="Peptidase_M24"/>
    <property type="match status" value="1"/>
</dbReference>
<dbReference type="Pfam" id="PF15801">
    <property type="entry name" value="zf-C6H2"/>
    <property type="match status" value="1"/>
</dbReference>
<dbReference type="PRINTS" id="PR00599">
    <property type="entry name" value="MAPEPTIDASE"/>
</dbReference>
<dbReference type="SUPFAM" id="SSF55920">
    <property type="entry name" value="Creatinase/aminopeptidase"/>
    <property type="match status" value="1"/>
</dbReference>
<dbReference type="PROSITE" id="PS00680">
    <property type="entry name" value="MAP_1"/>
    <property type="match status" value="1"/>
</dbReference>
<dbReference type="PROSITE" id="PS52013">
    <property type="entry name" value="ZF_C6H2"/>
    <property type="match status" value="1"/>
</dbReference>
<comment type="function">
    <text evidence="3 6">Cotranslationally removes the N-terminal methionine from nascent proteins. The N-terminal methionine is often cleaved when the second residue in the primary sequence is small and uncharged (Met-Ala-, Cys, Gly, Pro, Ser, Thr, or Val). Required for normal progression through the cell cycle.</text>
</comment>
<comment type="catalytic activity">
    <reaction evidence="1 6">
        <text>Release of N-terminal amino acids, preferentially methionine, from peptides and arylamides.</text>
        <dbReference type="EC" id="3.4.11.18"/>
    </reaction>
</comment>
<comment type="cofactor">
    <cofactor evidence="1">
        <name>Zn(2+)</name>
        <dbReference type="ChEBI" id="CHEBI:29105"/>
    </cofactor>
    <cofactor evidence="1">
        <name>Co(2+)</name>
        <dbReference type="ChEBI" id="CHEBI:48828"/>
    </cofactor>
    <cofactor evidence="1">
        <name>Mn(2+)</name>
        <dbReference type="ChEBI" id="CHEBI:29035"/>
    </cofactor>
    <cofactor evidence="1">
        <name>Fe(2+)</name>
        <dbReference type="ChEBI" id="CHEBI:29033"/>
    </cofactor>
    <text evidence="1">Binds 2 divalent metal cations per subunit. Has a high-affinity and a low affinity metal-binding site. The true nature of the physiological cofactor is under debate. The enzyme is active with zinc, cobalt, manganese or divalent iron ions. Has high activity with zinc; zinc cofactor is transferred into the active site region by the ZNG1 zinc chaperone.</text>
</comment>
<comment type="subunit">
    <text evidence="1">Associates with the 60S ribosomal subunit of the 80S translational complex.</text>
</comment>
<comment type="interaction">
    <interactant intactId="EBI-1051435">
        <id>P53582</id>
    </interactant>
    <interactant intactId="EBI-374781">
        <id>O76003</id>
        <label>GLRX3</label>
    </interactant>
    <organismsDiffer>false</organismsDiffer>
    <experiments>3</experiments>
</comment>
<comment type="interaction">
    <interactant intactId="EBI-1051435">
        <id>P53582</id>
    </interactant>
    <interactant intactId="EBI-6509505">
        <id>Q0VD86</id>
        <label>INCA1</label>
    </interactant>
    <organismsDiffer>false</organismsDiffer>
    <experiments>3</experiments>
</comment>
<comment type="interaction">
    <interactant intactId="EBI-1051435">
        <id>P53582</id>
    </interactant>
    <interactant intactId="EBI-16439278">
        <id>Q6FHY5</id>
        <label>MEOX2</label>
    </interactant>
    <organismsDiffer>false</organismsDiffer>
    <experiments>3</experiments>
</comment>
<comment type="interaction">
    <interactant intactId="EBI-1051435">
        <id>P53582</id>
    </interactant>
    <interactant intactId="EBI-11081753">
        <id>Q14596-2</id>
        <label>NBR1</label>
    </interactant>
    <organismsDiffer>false</organismsDiffer>
    <experiments>3</experiments>
</comment>
<comment type="interaction">
    <interactant intactId="EBI-1051435">
        <id>P53582</id>
    </interactant>
    <interactant intactId="EBI-949255">
        <id>Q58EX7</id>
        <label>PLEKHG4</label>
    </interactant>
    <organismsDiffer>false</organismsDiffer>
    <experiments>3</experiments>
</comment>
<comment type="interaction">
    <interactant intactId="EBI-1051435">
        <id>P53582</id>
    </interactant>
    <interactant intactId="EBI-527853">
        <id>Q9UGI0</id>
        <label>ZRANB1</label>
    </interactant>
    <organismsDiffer>false</organismsDiffer>
    <experiments>4</experiments>
</comment>
<comment type="subcellular location">
    <subcellularLocation>
        <location evidence="1">Cytoplasm</location>
    </subcellularLocation>
</comment>
<comment type="similarity">
    <text evidence="1">Belongs to the peptidase M24A family. Methionine aminopeptidase type 1 subfamily.</text>
</comment>
<comment type="sequence caution" evidence="7">
    <conflict type="erroneous initiation">
        <sequence resource="EMBL-CDS" id="AAH30054"/>
    </conflict>
</comment>
<comment type="sequence caution" evidence="7">
    <conflict type="erroneous initiation">
        <sequence resource="EMBL-CDS" id="BAA07679"/>
    </conflict>
</comment>
<gene>
    <name type="primary">METAP1</name>
    <name type="synonym">KIAA0094</name>
</gene>